<evidence type="ECO:0000255" key="1">
    <source>
        <dbReference type="HAMAP-Rule" id="MF_00190"/>
    </source>
</evidence>
<reference key="1">
    <citation type="journal article" date="2004" name="Nat. Genet.">
        <title>Comparison of genome degradation in Paratyphi A and Typhi, human-restricted serovars of Salmonella enterica that cause typhoid.</title>
        <authorList>
            <person name="McClelland M."/>
            <person name="Sanderson K.E."/>
            <person name="Clifton S.W."/>
            <person name="Latreille P."/>
            <person name="Porwollik S."/>
            <person name="Sabo A."/>
            <person name="Meyer R."/>
            <person name="Bieri T."/>
            <person name="Ozersky P."/>
            <person name="McLellan M."/>
            <person name="Harkins C.R."/>
            <person name="Wang C."/>
            <person name="Nguyen C."/>
            <person name="Berghoff A."/>
            <person name="Elliott G."/>
            <person name="Kohlberg S."/>
            <person name="Strong C."/>
            <person name="Du F."/>
            <person name="Carter J."/>
            <person name="Kremizki C."/>
            <person name="Layman D."/>
            <person name="Leonard S."/>
            <person name="Sun H."/>
            <person name="Fulton L."/>
            <person name="Nash W."/>
            <person name="Miner T."/>
            <person name="Minx P."/>
            <person name="Delehaunty K."/>
            <person name="Fronick C."/>
            <person name="Magrini V."/>
            <person name="Nhan M."/>
            <person name="Warren W."/>
            <person name="Florea L."/>
            <person name="Spieth J."/>
            <person name="Wilson R.K."/>
        </authorList>
    </citation>
    <scope>NUCLEOTIDE SEQUENCE [LARGE SCALE GENOMIC DNA]</scope>
    <source>
        <strain>ATCC 9150 / SARB42</strain>
    </source>
</reference>
<accession>Q5PCS9</accession>
<protein>
    <recommendedName>
        <fullName evidence="1">Cardiolipin synthase A</fullName>
        <shortName evidence="1">CL synthase</shortName>
        <ecNumber evidence="1">2.7.8.-</ecNumber>
    </recommendedName>
</protein>
<name>CLSA_SALPA</name>
<comment type="function">
    <text evidence="1">Catalyzes the reversible phosphatidyl group transfer from one phosphatidylglycerol molecule to another to form cardiolipin (CL) (diphosphatidylglycerol) and glycerol.</text>
</comment>
<comment type="catalytic activity">
    <reaction evidence="1">
        <text>2 a 1,2-diacyl-sn-glycero-3-phospho-(1'-sn-glycerol) = a cardiolipin + glycerol</text>
        <dbReference type="Rhea" id="RHEA:31451"/>
        <dbReference type="ChEBI" id="CHEBI:17754"/>
        <dbReference type="ChEBI" id="CHEBI:62237"/>
        <dbReference type="ChEBI" id="CHEBI:64716"/>
    </reaction>
</comment>
<comment type="subcellular location">
    <subcellularLocation>
        <location evidence="1">Cell inner membrane</location>
        <topology evidence="1">Multi-pass membrane protein</topology>
    </subcellularLocation>
</comment>
<comment type="similarity">
    <text evidence="1">Belongs to the phospholipase D family. Cardiolipin synthase subfamily. ClsA sub-subfamily.</text>
</comment>
<keyword id="KW-0997">Cell inner membrane</keyword>
<keyword id="KW-1003">Cell membrane</keyword>
<keyword id="KW-0444">Lipid biosynthesis</keyword>
<keyword id="KW-0443">Lipid metabolism</keyword>
<keyword id="KW-0472">Membrane</keyword>
<keyword id="KW-0594">Phospholipid biosynthesis</keyword>
<keyword id="KW-1208">Phospholipid metabolism</keyword>
<keyword id="KW-0677">Repeat</keyword>
<keyword id="KW-0808">Transferase</keyword>
<keyword id="KW-0812">Transmembrane</keyword>
<keyword id="KW-1133">Transmembrane helix</keyword>
<gene>
    <name evidence="1" type="primary">clsA</name>
    <name type="synonym">cls</name>
    <name type="ordered locus">SPA1138</name>
</gene>
<feature type="chain" id="PRO_1000058492" description="Cardiolipin synthase A">
    <location>
        <begin position="1"/>
        <end position="486"/>
    </location>
</feature>
<feature type="transmembrane region" description="Helical" evidence="1">
    <location>
        <begin position="3"/>
        <end position="23"/>
    </location>
</feature>
<feature type="transmembrane region" description="Helical" evidence="1">
    <location>
        <begin position="38"/>
        <end position="58"/>
    </location>
</feature>
<feature type="domain" description="PLD phosphodiesterase 1" evidence="1">
    <location>
        <begin position="219"/>
        <end position="246"/>
    </location>
</feature>
<feature type="domain" description="PLD phosphodiesterase 2" evidence="1">
    <location>
        <begin position="399"/>
        <end position="426"/>
    </location>
</feature>
<feature type="active site" evidence="1">
    <location>
        <position position="224"/>
    </location>
</feature>
<feature type="active site" evidence="1">
    <location>
        <position position="226"/>
    </location>
</feature>
<feature type="active site" evidence="1">
    <location>
        <position position="231"/>
    </location>
</feature>
<feature type="active site" evidence="1">
    <location>
        <position position="404"/>
    </location>
</feature>
<feature type="active site" evidence="1">
    <location>
        <position position="406"/>
    </location>
</feature>
<feature type="active site" evidence="1">
    <location>
        <position position="411"/>
    </location>
</feature>
<organism>
    <name type="scientific">Salmonella paratyphi A (strain ATCC 9150 / SARB42)</name>
    <dbReference type="NCBI Taxonomy" id="295319"/>
    <lineage>
        <taxon>Bacteria</taxon>
        <taxon>Pseudomonadati</taxon>
        <taxon>Pseudomonadota</taxon>
        <taxon>Gammaproteobacteria</taxon>
        <taxon>Enterobacterales</taxon>
        <taxon>Enterobacteriaceae</taxon>
        <taxon>Salmonella</taxon>
    </lineage>
</organism>
<sequence>MTTFYTVVSWLVILGYWVLIAGVTLRILMKRRAVPSAMAWLLIIYILPLVGIIAYLSVGELHLGKRRAERARAMWPSTAKWLNDLKACKHIFAQENSSVASSLFKLCERRQGIAGVKGNQLQLLTDSDDVMQALIRDIQLARHNIEMVFYIWQPGGMADQVAESLMAAARRDIHCRLMLDSAGSVAFFRSPWAAMMRNAGIEVVEALKVNLMRVFLRRMDLRQHRKMVMIDNYIAYTGSMNMVDPRFFKQDAGVGQWVDLMARMEGPVATAMGIVYSCDWEIETGKRILPPPPDVNIMPFEQASGHTIHTIASGPGFPEDLIHQALLTATYAAREYLIMTTPYFVPSDDLLHAICTAAQRGVDVSIILPRKNDSLLVGWASRAFFSELLAAGVKIYQFEGGLLHTKSVLVDGELSLVGTVNLDMRSLWLNFEITLVIDDTGFGADLAAVQDDYISRSRLLDARLWVKRPLWQRITERLFYFFSPLL</sequence>
<dbReference type="EC" id="2.7.8.-" evidence="1"/>
<dbReference type="EMBL" id="CP000026">
    <property type="protein sequence ID" value="AAV77099.1"/>
    <property type="molecule type" value="Genomic_DNA"/>
</dbReference>
<dbReference type="RefSeq" id="WP_000206883.1">
    <property type="nucleotide sequence ID" value="NC_006511.1"/>
</dbReference>
<dbReference type="SMR" id="Q5PCS9"/>
<dbReference type="KEGG" id="spt:SPA1138"/>
<dbReference type="HOGENOM" id="CLU_038053_1_0_6"/>
<dbReference type="Proteomes" id="UP000008185">
    <property type="component" value="Chromosome"/>
</dbReference>
<dbReference type="GO" id="GO:0005886">
    <property type="term" value="C:plasma membrane"/>
    <property type="evidence" value="ECO:0007669"/>
    <property type="project" value="UniProtKB-SubCell"/>
</dbReference>
<dbReference type="GO" id="GO:0008808">
    <property type="term" value="F:cardiolipin synthase activity"/>
    <property type="evidence" value="ECO:0007669"/>
    <property type="project" value="InterPro"/>
</dbReference>
<dbReference type="GO" id="GO:0032049">
    <property type="term" value="P:cardiolipin biosynthetic process"/>
    <property type="evidence" value="ECO:0007669"/>
    <property type="project" value="InterPro"/>
</dbReference>
<dbReference type="CDD" id="cd09152">
    <property type="entry name" value="PLDc_EcCLS_like_1"/>
    <property type="match status" value="1"/>
</dbReference>
<dbReference type="CDD" id="cd09158">
    <property type="entry name" value="PLDc_EcCLS_like_2"/>
    <property type="match status" value="1"/>
</dbReference>
<dbReference type="FunFam" id="3.30.870.10:FF:000002">
    <property type="entry name" value="Cardiolipin synthase A"/>
    <property type="match status" value="1"/>
</dbReference>
<dbReference type="FunFam" id="3.30.870.10:FF:000003">
    <property type="entry name" value="Cardiolipin synthase A"/>
    <property type="match status" value="1"/>
</dbReference>
<dbReference type="Gene3D" id="3.30.870.10">
    <property type="entry name" value="Endonuclease Chain A"/>
    <property type="match status" value="2"/>
</dbReference>
<dbReference type="HAMAP" id="MF_00190">
    <property type="entry name" value="Cardiolipin_synth_ClsA"/>
    <property type="match status" value="1"/>
</dbReference>
<dbReference type="InterPro" id="IPR022924">
    <property type="entry name" value="Cardiolipin_synthase"/>
</dbReference>
<dbReference type="InterPro" id="IPR030840">
    <property type="entry name" value="CL_synthase_A"/>
</dbReference>
<dbReference type="InterPro" id="IPR027379">
    <property type="entry name" value="CLS_N"/>
</dbReference>
<dbReference type="InterPro" id="IPR025202">
    <property type="entry name" value="PLD-like_dom"/>
</dbReference>
<dbReference type="InterPro" id="IPR001736">
    <property type="entry name" value="PLipase_D/transphosphatidylase"/>
</dbReference>
<dbReference type="NCBIfam" id="TIGR04265">
    <property type="entry name" value="bac_cardiolipin"/>
    <property type="match status" value="1"/>
</dbReference>
<dbReference type="PANTHER" id="PTHR21248">
    <property type="entry name" value="CARDIOLIPIN SYNTHASE"/>
    <property type="match status" value="1"/>
</dbReference>
<dbReference type="PANTHER" id="PTHR21248:SF22">
    <property type="entry name" value="PHOSPHOLIPASE D"/>
    <property type="match status" value="1"/>
</dbReference>
<dbReference type="Pfam" id="PF13091">
    <property type="entry name" value="PLDc_2"/>
    <property type="match status" value="2"/>
</dbReference>
<dbReference type="Pfam" id="PF13396">
    <property type="entry name" value="PLDc_N"/>
    <property type="match status" value="1"/>
</dbReference>
<dbReference type="SMART" id="SM00155">
    <property type="entry name" value="PLDc"/>
    <property type="match status" value="2"/>
</dbReference>
<dbReference type="SUPFAM" id="SSF56024">
    <property type="entry name" value="Phospholipase D/nuclease"/>
    <property type="match status" value="2"/>
</dbReference>
<dbReference type="PROSITE" id="PS50035">
    <property type="entry name" value="PLD"/>
    <property type="match status" value="2"/>
</dbReference>
<proteinExistence type="inferred from homology"/>